<reference key="1">
    <citation type="submission" date="2008-02" db="EMBL/GenBank/DDBJ databases">
        <title>Complete sequence of chromosome 1 of Burkholderia cenocepacia MC0-3.</title>
        <authorList>
            <person name="Copeland A."/>
            <person name="Lucas S."/>
            <person name="Lapidus A."/>
            <person name="Barry K."/>
            <person name="Bruce D."/>
            <person name="Goodwin L."/>
            <person name="Glavina del Rio T."/>
            <person name="Dalin E."/>
            <person name="Tice H."/>
            <person name="Pitluck S."/>
            <person name="Chain P."/>
            <person name="Malfatti S."/>
            <person name="Shin M."/>
            <person name="Vergez L."/>
            <person name="Schmutz J."/>
            <person name="Larimer F."/>
            <person name="Land M."/>
            <person name="Hauser L."/>
            <person name="Kyrpides N."/>
            <person name="Mikhailova N."/>
            <person name="Tiedje J."/>
            <person name="Richardson P."/>
        </authorList>
    </citation>
    <scope>NUCLEOTIDE SEQUENCE [LARGE SCALE GENOMIC DNA]</scope>
    <source>
        <strain>MC0-3</strain>
    </source>
</reference>
<keyword id="KW-0963">Cytoplasm</keyword>
<keyword id="KW-0378">Hydrolase</keyword>
<keyword id="KW-0540">Nuclease</keyword>
<keyword id="KW-0690">Ribosome biogenesis</keyword>
<protein>
    <recommendedName>
        <fullName evidence="1">Putative pre-16S rRNA nuclease</fullName>
        <ecNumber evidence="1">3.1.-.-</ecNumber>
    </recommendedName>
</protein>
<dbReference type="EC" id="3.1.-.-" evidence="1"/>
<dbReference type="EMBL" id="CP000958">
    <property type="protein sequence ID" value="ACA90014.1"/>
    <property type="molecule type" value="Genomic_DNA"/>
</dbReference>
<dbReference type="SMR" id="B1JWP0"/>
<dbReference type="GeneID" id="83047629"/>
<dbReference type="KEGG" id="bcm:Bcenmc03_0836"/>
<dbReference type="HOGENOM" id="CLU_098240_3_0_4"/>
<dbReference type="Proteomes" id="UP000002169">
    <property type="component" value="Chromosome 1"/>
</dbReference>
<dbReference type="GO" id="GO:0005829">
    <property type="term" value="C:cytosol"/>
    <property type="evidence" value="ECO:0007669"/>
    <property type="project" value="TreeGrafter"/>
</dbReference>
<dbReference type="GO" id="GO:0004518">
    <property type="term" value="F:nuclease activity"/>
    <property type="evidence" value="ECO:0007669"/>
    <property type="project" value="UniProtKB-KW"/>
</dbReference>
<dbReference type="GO" id="GO:0000967">
    <property type="term" value="P:rRNA 5'-end processing"/>
    <property type="evidence" value="ECO:0007669"/>
    <property type="project" value="UniProtKB-UniRule"/>
</dbReference>
<dbReference type="CDD" id="cd16964">
    <property type="entry name" value="YqgF"/>
    <property type="match status" value="1"/>
</dbReference>
<dbReference type="Gene3D" id="3.30.420.140">
    <property type="entry name" value="YqgF/RNase H-like domain"/>
    <property type="match status" value="1"/>
</dbReference>
<dbReference type="HAMAP" id="MF_00651">
    <property type="entry name" value="Nuclease_YqgF"/>
    <property type="match status" value="1"/>
</dbReference>
<dbReference type="InterPro" id="IPR012337">
    <property type="entry name" value="RNaseH-like_sf"/>
</dbReference>
<dbReference type="InterPro" id="IPR005227">
    <property type="entry name" value="YqgF"/>
</dbReference>
<dbReference type="InterPro" id="IPR006641">
    <property type="entry name" value="YqgF/RNaseH-like_dom"/>
</dbReference>
<dbReference type="InterPro" id="IPR037027">
    <property type="entry name" value="YqgF/RNaseH-like_dom_sf"/>
</dbReference>
<dbReference type="NCBIfam" id="TIGR00250">
    <property type="entry name" value="RNAse_H_YqgF"/>
    <property type="match status" value="1"/>
</dbReference>
<dbReference type="PANTHER" id="PTHR33317">
    <property type="entry name" value="POLYNUCLEOTIDYL TRANSFERASE, RIBONUCLEASE H-LIKE SUPERFAMILY PROTEIN"/>
    <property type="match status" value="1"/>
</dbReference>
<dbReference type="PANTHER" id="PTHR33317:SF4">
    <property type="entry name" value="POLYNUCLEOTIDYL TRANSFERASE, RIBONUCLEASE H-LIKE SUPERFAMILY PROTEIN"/>
    <property type="match status" value="1"/>
</dbReference>
<dbReference type="Pfam" id="PF03652">
    <property type="entry name" value="RuvX"/>
    <property type="match status" value="1"/>
</dbReference>
<dbReference type="SMART" id="SM00732">
    <property type="entry name" value="YqgFc"/>
    <property type="match status" value="1"/>
</dbReference>
<dbReference type="SUPFAM" id="SSF53098">
    <property type="entry name" value="Ribonuclease H-like"/>
    <property type="match status" value="1"/>
</dbReference>
<feature type="chain" id="PRO_1000131005" description="Putative pre-16S rRNA nuclease">
    <location>
        <begin position="1"/>
        <end position="149"/>
    </location>
</feature>
<proteinExistence type="inferred from homology"/>
<organism>
    <name type="scientific">Burkholderia orbicola (strain MC0-3)</name>
    <dbReference type="NCBI Taxonomy" id="406425"/>
    <lineage>
        <taxon>Bacteria</taxon>
        <taxon>Pseudomonadati</taxon>
        <taxon>Pseudomonadota</taxon>
        <taxon>Betaproteobacteria</taxon>
        <taxon>Burkholderiales</taxon>
        <taxon>Burkholderiaceae</taxon>
        <taxon>Burkholderia</taxon>
        <taxon>Burkholderia cepacia complex</taxon>
        <taxon>Burkholderia orbicola</taxon>
    </lineage>
</organism>
<name>YQGF_BURO0</name>
<accession>B1JWP0</accession>
<comment type="function">
    <text evidence="1">Could be a nuclease involved in processing of the 5'-end of pre-16S rRNA.</text>
</comment>
<comment type="subcellular location">
    <subcellularLocation>
        <location evidence="1">Cytoplasm</location>
    </subcellularLocation>
</comment>
<comment type="similarity">
    <text evidence="1">Belongs to the YqgF nuclease family.</text>
</comment>
<evidence type="ECO:0000255" key="1">
    <source>
        <dbReference type="HAMAP-Rule" id="MF_00651"/>
    </source>
</evidence>
<sequence length="149" mass="16642">MSGASARDATLLAFDYGEKRIGVAIGNALTRSARALVVIQNLNREHRFKAVGDLLAEWRPDALVVGLPMHPDGTPHDMTQQAKRFGNQLNGRFGLPVTWVDERYSSVEAEAGLRERNVRGRARTDMLDAEAARVILQQYLDQLSDHEHH</sequence>
<gene>
    <name type="ordered locus">Bcenmc03_0836</name>
</gene>